<organism>
    <name type="scientific">Ralstonia nicotianae (strain ATCC BAA-1114 / GMI1000)</name>
    <name type="common">Ralstonia solanacearum</name>
    <dbReference type="NCBI Taxonomy" id="267608"/>
    <lineage>
        <taxon>Bacteria</taxon>
        <taxon>Pseudomonadati</taxon>
        <taxon>Pseudomonadota</taxon>
        <taxon>Betaproteobacteria</taxon>
        <taxon>Burkholderiales</taxon>
        <taxon>Burkholderiaceae</taxon>
        <taxon>Ralstonia</taxon>
        <taxon>Ralstonia solanacearum species complex</taxon>
    </lineage>
</organism>
<dbReference type="EC" id="2.7.2.11" evidence="1"/>
<dbReference type="EMBL" id="AL646052">
    <property type="protein sequence ID" value="CAD16526.1"/>
    <property type="molecule type" value="Genomic_DNA"/>
</dbReference>
<dbReference type="SMR" id="Q8XVL1"/>
<dbReference type="STRING" id="267608.RSc2819"/>
<dbReference type="DNASU" id="1221666"/>
<dbReference type="EnsemblBacteria" id="CAD16526">
    <property type="protein sequence ID" value="CAD16526"/>
    <property type="gene ID" value="RSc2819"/>
</dbReference>
<dbReference type="KEGG" id="rso:RSc2819"/>
<dbReference type="eggNOG" id="COG0263">
    <property type="taxonomic scope" value="Bacteria"/>
</dbReference>
<dbReference type="HOGENOM" id="CLU_025400_2_0_4"/>
<dbReference type="UniPathway" id="UPA00098">
    <property type="reaction ID" value="UER00359"/>
</dbReference>
<dbReference type="Proteomes" id="UP000001436">
    <property type="component" value="Chromosome"/>
</dbReference>
<dbReference type="GO" id="GO:0005829">
    <property type="term" value="C:cytosol"/>
    <property type="evidence" value="ECO:0007669"/>
    <property type="project" value="TreeGrafter"/>
</dbReference>
<dbReference type="GO" id="GO:0005524">
    <property type="term" value="F:ATP binding"/>
    <property type="evidence" value="ECO:0007669"/>
    <property type="project" value="UniProtKB-KW"/>
</dbReference>
<dbReference type="GO" id="GO:0004349">
    <property type="term" value="F:glutamate 5-kinase activity"/>
    <property type="evidence" value="ECO:0007669"/>
    <property type="project" value="UniProtKB-UniRule"/>
</dbReference>
<dbReference type="GO" id="GO:0003723">
    <property type="term" value="F:RNA binding"/>
    <property type="evidence" value="ECO:0007669"/>
    <property type="project" value="InterPro"/>
</dbReference>
<dbReference type="GO" id="GO:0055129">
    <property type="term" value="P:L-proline biosynthetic process"/>
    <property type="evidence" value="ECO:0007669"/>
    <property type="project" value="UniProtKB-UniRule"/>
</dbReference>
<dbReference type="CDD" id="cd04242">
    <property type="entry name" value="AAK_G5K_ProB"/>
    <property type="match status" value="1"/>
</dbReference>
<dbReference type="CDD" id="cd21157">
    <property type="entry name" value="PUA_G5K"/>
    <property type="match status" value="1"/>
</dbReference>
<dbReference type="FunFam" id="2.30.130.10:FF:000007">
    <property type="entry name" value="Glutamate 5-kinase"/>
    <property type="match status" value="1"/>
</dbReference>
<dbReference type="FunFam" id="3.40.1160.10:FF:000018">
    <property type="entry name" value="Glutamate 5-kinase"/>
    <property type="match status" value="1"/>
</dbReference>
<dbReference type="Gene3D" id="3.40.1160.10">
    <property type="entry name" value="Acetylglutamate kinase-like"/>
    <property type="match status" value="1"/>
</dbReference>
<dbReference type="Gene3D" id="2.30.130.10">
    <property type="entry name" value="PUA domain"/>
    <property type="match status" value="1"/>
</dbReference>
<dbReference type="HAMAP" id="MF_00456">
    <property type="entry name" value="ProB"/>
    <property type="match status" value="1"/>
</dbReference>
<dbReference type="InterPro" id="IPR036393">
    <property type="entry name" value="AceGlu_kinase-like_sf"/>
</dbReference>
<dbReference type="InterPro" id="IPR001048">
    <property type="entry name" value="Asp/Glu/Uridylate_kinase"/>
</dbReference>
<dbReference type="InterPro" id="IPR041739">
    <property type="entry name" value="G5K_ProB"/>
</dbReference>
<dbReference type="InterPro" id="IPR001057">
    <property type="entry name" value="Glu/AcGlu_kinase"/>
</dbReference>
<dbReference type="InterPro" id="IPR011529">
    <property type="entry name" value="Glu_5kinase"/>
</dbReference>
<dbReference type="InterPro" id="IPR005715">
    <property type="entry name" value="Glu_5kinase/COase_Synthase"/>
</dbReference>
<dbReference type="InterPro" id="IPR019797">
    <property type="entry name" value="Glutamate_5-kinase_CS"/>
</dbReference>
<dbReference type="InterPro" id="IPR002478">
    <property type="entry name" value="PUA"/>
</dbReference>
<dbReference type="InterPro" id="IPR015947">
    <property type="entry name" value="PUA-like_sf"/>
</dbReference>
<dbReference type="InterPro" id="IPR036974">
    <property type="entry name" value="PUA_sf"/>
</dbReference>
<dbReference type="NCBIfam" id="TIGR01027">
    <property type="entry name" value="proB"/>
    <property type="match status" value="1"/>
</dbReference>
<dbReference type="PANTHER" id="PTHR43654">
    <property type="entry name" value="GLUTAMATE 5-KINASE"/>
    <property type="match status" value="1"/>
</dbReference>
<dbReference type="PANTHER" id="PTHR43654:SF1">
    <property type="entry name" value="ISOPENTENYL PHOSPHATE KINASE"/>
    <property type="match status" value="1"/>
</dbReference>
<dbReference type="Pfam" id="PF00696">
    <property type="entry name" value="AA_kinase"/>
    <property type="match status" value="1"/>
</dbReference>
<dbReference type="Pfam" id="PF01472">
    <property type="entry name" value="PUA"/>
    <property type="match status" value="1"/>
</dbReference>
<dbReference type="PIRSF" id="PIRSF000729">
    <property type="entry name" value="GK"/>
    <property type="match status" value="1"/>
</dbReference>
<dbReference type="PRINTS" id="PR00474">
    <property type="entry name" value="GLU5KINASE"/>
</dbReference>
<dbReference type="SMART" id="SM00359">
    <property type="entry name" value="PUA"/>
    <property type="match status" value="1"/>
</dbReference>
<dbReference type="SUPFAM" id="SSF53633">
    <property type="entry name" value="Carbamate kinase-like"/>
    <property type="match status" value="1"/>
</dbReference>
<dbReference type="SUPFAM" id="SSF88697">
    <property type="entry name" value="PUA domain-like"/>
    <property type="match status" value="1"/>
</dbReference>
<dbReference type="PROSITE" id="PS00902">
    <property type="entry name" value="GLUTAMATE_5_KINASE"/>
    <property type="match status" value="1"/>
</dbReference>
<dbReference type="PROSITE" id="PS50890">
    <property type="entry name" value="PUA"/>
    <property type="match status" value="1"/>
</dbReference>
<feature type="chain" id="PRO_0000109712" description="Glutamate 5-kinase">
    <location>
        <begin position="1"/>
        <end position="374"/>
    </location>
</feature>
<feature type="domain" description="PUA" evidence="1">
    <location>
        <begin position="282"/>
        <end position="360"/>
    </location>
</feature>
<feature type="binding site" evidence="1">
    <location>
        <position position="16"/>
    </location>
    <ligand>
        <name>ATP</name>
        <dbReference type="ChEBI" id="CHEBI:30616"/>
    </ligand>
</feature>
<feature type="binding site" evidence="1">
    <location>
        <position position="56"/>
    </location>
    <ligand>
        <name>substrate</name>
    </ligand>
</feature>
<feature type="binding site" evidence="1">
    <location>
        <position position="143"/>
    </location>
    <ligand>
        <name>substrate</name>
    </ligand>
</feature>
<feature type="binding site" evidence="1">
    <location>
        <position position="155"/>
    </location>
    <ligand>
        <name>substrate</name>
    </ligand>
</feature>
<feature type="binding site" evidence="1">
    <location>
        <begin position="175"/>
        <end position="176"/>
    </location>
    <ligand>
        <name>ATP</name>
        <dbReference type="ChEBI" id="CHEBI:30616"/>
    </ligand>
</feature>
<reference key="1">
    <citation type="journal article" date="2002" name="Nature">
        <title>Genome sequence of the plant pathogen Ralstonia solanacearum.</title>
        <authorList>
            <person name="Salanoubat M."/>
            <person name="Genin S."/>
            <person name="Artiguenave F."/>
            <person name="Gouzy J."/>
            <person name="Mangenot S."/>
            <person name="Arlat M."/>
            <person name="Billault A."/>
            <person name="Brottier P."/>
            <person name="Camus J.-C."/>
            <person name="Cattolico L."/>
            <person name="Chandler M."/>
            <person name="Choisne N."/>
            <person name="Claudel-Renard C."/>
            <person name="Cunnac S."/>
            <person name="Demange N."/>
            <person name="Gaspin C."/>
            <person name="Lavie M."/>
            <person name="Moisan A."/>
            <person name="Robert C."/>
            <person name="Saurin W."/>
            <person name="Schiex T."/>
            <person name="Siguier P."/>
            <person name="Thebault P."/>
            <person name="Whalen M."/>
            <person name="Wincker P."/>
            <person name="Levy M."/>
            <person name="Weissenbach J."/>
            <person name="Boucher C.A."/>
        </authorList>
    </citation>
    <scope>NUCLEOTIDE SEQUENCE [LARGE SCALE GENOMIC DNA]</scope>
    <source>
        <strain>ATCC BAA-1114 / GMI1000</strain>
    </source>
</reference>
<comment type="function">
    <text evidence="1">Catalyzes the transfer of a phosphate group to glutamate to form L-glutamate 5-phosphate.</text>
</comment>
<comment type="catalytic activity">
    <reaction evidence="1">
        <text>L-glutamate + ATP = L-glutamyl 5-phosphate + ADP</text>
        <dbReference type="Rhea" id="RHEA:14877"/>
        <dbReference type="ChEBI" id="CHEBI:29985"/>
        <dbReference type="ChEBI" id="CHEBI:30616"/>
        <dbReference type="ChEBI" id="CHEBI:58274"/>
        <dbReference type="ChEBI" id="CHEBI:456216"/>
        <dbReference type="EC" id="2.7.2.11"/>
    </reaction>
</comment>
<comment type="pathway">
    <text evidence="1">Amino-acid biosynthesis; L-proline biosynthesis; L-glutamate 5-semialdehyde from L-glutamate: step 1/2.</text>
</comment>
<comment type="subcellular location">
    <subcellularLocation>
        <location evidence="1">Cytoplasm</location>
    </subcellularLocation>
</comment>
<comment type="similarity">
    <text evidence="1">Belongs to the glutamate 5-kinase family.</text>
</comment>
<sequence>MALRSLIADARRLVVKVGSSLVTDDGRGLDQAAIARWAAQIAALRAAGKEVVLVSSGAIAEGMQRLGWTRRPKEIHELQAAAAVGQMGLAQVYESEFARHGIRTAQVLLTHGDLADRERYLNARSTLLTLLGLGVVPIINENDTVVTDEIKFGDNDTLGALVTNLIEGDALIILTDQRGLYTADPRKHPDARFVDEAQAGAPELEAMAGGAGSSIGKGGMLTKIVAAKRAAKSGAHTVIASGREADVLARLAGGEAIGTQLRAPTGRMAARKQWMIDHLQLRGRVVLDAGAVDKLTAGGKSLLPIGVTEVQGEFARGEVISCVDTAGREVARGLTNYSAAEARLIARKASSEIEAVLGYVSAAELVHRDNLVLL</sequence>
<keyword id="KW-0028">Amino-acid biosynthesis</keyword>
<keyword id="KW-0067">ATP-binding</keyword>
<keyword id="KW-0963">Cytoplasm</keyword>
<keyword id="KW-0418">Kinase</keyword>
<keyword id="KW-0547">Nucleotide-binding</keyword>
<keyword id="KW-0641">Proline biosynthesis</keyword>
<keyword id="KW-1185">Reference proteome</keyword>
<keyword id="KW-0808">Transferase</keyword>
<name>PROB_RALN1</name>
<proteinExistence type="inferred from homology"/>
<accession>Q8XVL1</accession>
<protein>
    <recommendedName>
        <fullName evidence="1">Glutamate 5-kinase</fullName>
        <ecNumber evidence="1">2.7.2.11</ecNumber>
    </recommendedName>
    <alternativeName>
        <fullName evidence="1">Gamma-glutamyl kinase</fullName>
        <shortName evidence="1">GK</shortName>
    </alternativeName>
</protein>
<evidence type="ECO:0000255" key="1">
    <source>
        <dbReference type="HAMAP-Rule" id="MF_00456"/>
    </source>
</evidence>
<gene>
    <name evidence="1" type="primary">proB</name>
    <name type="ordered locus">RSc2819</name>
    <name type="ORF">RS00286</name>
</gene>